<feature type="chain" id="PRO_0000215486" description="4-deoxy-L-threo-5-hexosulose-uronate ketol-isomerase">
    <location>
        <begin position="1"/>
        <end position="278"/>
    </location>
</feature>
<feature type="binding site" evidence="1">
    <location>
        <position position="196"/>
    </location>
    <ligand>
        <name>Zn(2+)</name>
        <dbReference type="ChEBI" id="CHEBI:29105"/>
    </ligand>
</feature>
<feature type="binding site" evidence="1">
    <location>
        <position position="198"/>
    </location>
    <ligand>
        <name>Zn(2+)</name>
        <dbReference type="ChEBI" id="CHEBI:29105"/>
    </ligand>
</feature>
<feature type="binding site" evidence="1">
    <location>
        <position position="203"/>
    </location>
    <ligand>
        <name>Zn(2+)</name>
        <dbReference type="ChEBI" id="CHEBI:29105"/>
    </ligand>
</feature>
<feature type="binding site" evidence="1">
    <location>
        <position position="245"/>
    </location>
    <ligand>
        <name>Zn(2+)</name>
        <dbReference type="ChEBI" id="CHEBI:29105"/>
    </ligand>
</feature>
<name>KDUI_ECO57</name>
<evidence type="ECO:0000250" key="1"/>
<evidence type="ECO:0000305" key="2"/>
<reference key="1">
    <citation type="journal article" date="2001" name="Nature">
        <title>Genome sequence of enterohaemorrhagic Escherichia coli O157:H7.</title>
        <authorList>
            <person name="Perna N.T."/>
            <person name="Plunkett G. III"/>
            <person name="Burland V."/>
            <person name="Mau B."/>
            <person name="Glasner J.D."/>
            <person name="Rose D.J."/>
            <person name="Mayhew G.F."/>
            <person name="Evans P.S."/>
            <person name="Gregor J."/>
            <person name="Kirkpatrick H.A."/>
            <person name="Posfai G."/>
            <person name="Hackett J."/>
            <person name="Klink S."/>
            <person name="Boutin A."/>
            <person name="Shao Y."/>
            <person name="Miller L."/>
            <person name="Grotbeck E.J."/>
            <person name="Davis N.W."/>
            <person name="Lim A."/>
            <person name="Dimalanta E.T."/>
            <person name="Potamousis K."/>
            <person name="Apodaca J."/>
            <person name="Anantharaman T.S."/>
            <person name="Lin J."/>
            <person name="Yen G."/>
            <person name="Schwartz D.C."/>
            <person name="Welch R.A."/>
            <person name="Blattner F.R."/>
        </authorList>
    </citation>
    <scope>NUCLEOTIDE SEQUENCE [LARGE SCALE GENOMIC DNA]</scope>
    <source>
        <strain>O157:H7 / EDL933 / ATCC 700927 / EHEC</strain>
    </source>
</reference>
<reference key="2">
    <citation type="journal article" date="2001" name="DNA Res.">
        <title>Complete genome sequence of enterohemorrhagic Escherichia coli O157:H7 and genomic comparison with a laboratory strain K-12.</title>
        <authorList>
            <person name="Hayashi T."/>
            <person name="Makino K."/>
            <person name="Ohnishi M."/>
            <person name="Kurokawa K."/>
            <person name="Ishii K."/>
            <person name="Yokoyama K."/>
            <person name="Han C.-G."/>
            <person name="Ohtsubo E."/>
            <person name="Nakayama K."/>
            <person name="Murata T."/>
            <person name="Tanaka M."/>
            <person name="Tobe T."/>
            <person name="Iida T."/>
            <person name="Takami H."/>
            <person name="Honda T."/>
            <person name="Sasakawa C."/>
            <person name="Ogasawara N."/>
            <person name="Yasunaga T."/>
            <person name="Kuhara S."/>
            <person name="Shiba T."/>
            <person name="Hattori M."/>
            <person name="Shinagawa H."/>
        </authorList>
    </citation>
    <scope>NUCLEOTIDE SEQUENCE [LARGE SCALE GENOMIC DNA]</scope>
    <source>
        <strain>O157:H7 / Sakai / RIMD 0509952 / EHEC</strain>
    </source>
</reference>
<protein>
    <recommendedName>
        <fullName>4-deoxy-L-threo-5-hexosulose-uronate ketol-isomerase</fullName>
        <ecNumber>5.3.1.17</ecNumber>
    </recommendedName>
    <alternativeName>
        <fullName>5-keto-4-deoxyuronate isomerase</fullName>
    </alternativeName>
    <alternativeName>
        <fullName>DKI isomerase</fullName>
    </alternativeName>
</protein>
<accession>Q8X6I8</accession>
<proteinExistence type="inferred from homology"/>
<comment type="function">
    <text evidence="1">Catalyzes the isomerization of 5-dehydro-4-deoxy-D-glucuronate to 3-deoxy-D-glycero-2,5-hexodiulosonate.</text>
</comment>
<comment type="catalytic activity">
    <reaction>
        <text>5-dehydro-4-deoxy-D-glucuronate = 3-deoxy-D-glycero-2,5-hexodiulosonate</text>
        <dbReference type="Rhea" id="RHEA:23896"/>
        <dbReference type="ChEBI" id="CHEBI:17117"/>
        <dbReference type="ChEBI" id="CHEBI:29071"/>
        <dbReference type="EC" id="5.3.1.17"/>
    </reaction>
</comment>
<comment type="cofactor">
    <cofactor evidence="1">
        <name>Zn(2+)</name>
        <dbReference type="ChEBI" id="CHEBI:29105"/>
    </cofactor>
    <text evidence="1">Binds 1 zinc ion per subunit.</text>
</comment>
<comment type="pathway">
    <text>Glycan metabolism; pectin degradation; 2-dehydro-3-deoxy-D-gluconate from pectin: step 4/5.</text>
</comment>
<comment type="subunit">
    <text evidence="1">Homohexamer.</text>
</comment>
<comment type="similarity">
    <text evidence="2">Belongs to the KduI family.</text>
</comment>
<keyword id="KW-0413">Isomerase</keyword>
<keyword id="KW-0479">Metal-binding</keyword>
<keyword id="KW-1185">Reference proteome</keyword>
<keyword id="KW-0862">Zinc</keyword>
<sequence>MDVRQSIHSAHAKTLETQGLRNEFLVEKVFVADEYTMVYSHIDRIIIGGIMPVTKTVSVGGEVGKQLGVSYFLERRELGVINIGGAGTITVDGQCYEIGHRDALYVGKGAKEVVFASIDTGTPAKFYYNCAPAHTTYPTKKVTPDEVSPVTLGDNLTSNRRTINKYFVPDVLETCQLSMGLTELAPGNLWNTMPCHTHERRMEVYFYFNMDDDACVFHMMGQPQETRHIVMHNEQAVISPSWSIHSGVGTKAYTFIWGMVGENQVFDDMDHVAVKDLR</sequence>
<gene>
    <name type="primary">kduI</name>
    <name type="ordered locus">Z4163</name>
    <name type="ordered locus">ECs3700</name>
</gene>
<organism>
    <name type="scientific">Escherichia coli O157:H7</name>
    <dbReference type="NCBI Taxonomy" id="83334"/>
    <lineage>
        <taxon>Bacteria</taxon>
        <taxon>Pseudomonadati</taxon>
        <taxon>Pseudomonadota</taxon>
        <taxon>Gammaproteobacteria</taxon>
        <taxon>Enterobacterales</taxon>
        <taxon>Enterobacteriaceae</taxon>
        <taxon>Escherichia</taxon>
    </lineage>
</organism>
<dbReference type="EC" id="5.3.1.17"/>
<dbReference type="EMBL" id="AE005174">
    <property type="protein sequence ID" value="AAG57955.1"/>
    <property type="molecule type" value="Genomic_DNA"/>
</dbReference>
<dbReference type="EMBL" id="BA000007">
    <property type="protein sequence ID" value="BAB37123.1"/>
    <property type="molecule type" value="Genomic_DNA"/>
</dbReference>
<dbReference type="PIR" id="D91091">
    <property type="entry name" value="D91091"/>
</dbReference>
<dbReference type="PIR" id="G85936">
    <property type="entry name" value="G85936"/>
</dbReference>
<dbReference type="RefSeq" id="NP_311727.1">
    <property type="nucleotide sequence ID" value="NC_002695.1"/>
</dbReference>
<dbReference type="RefSeq" id="WP_000383257.1">
    <property type="nucleotide sequence ID" value="NZ_VOAI01000003.1"/>
</dbReference>
<dbReference type="SMR" id="Q8X6I8"/>
<dbReference type="STRING" id="155864.Z4163"/>
<dbReference type="GeneID" id="916485"/>
<dbReference type="KEGG" id="ece:Z4163"/>
<dbReference type="KEGG" id="ecs:ECs_3700"/>
<dbReference type="PATRIC" id="fig|386585.9.peg.3867"/>
<dbReference type="eggNOG" id="COG3717">
    <property type="taxonomic scope" value="Bacteria"/>
</dbReference>
<dbReference type="HOGENOM" id="CLU_062609_0_0_6"/>
<dbReference type="OMA" id="CHTHDRR"/>
<dbReference type="UniPathway" id="UPA00545">
    <property type="reaction ID" value="UER00826"/>
</dbReference>
<dbReference type="Proteomes" id="UP000000558">
    <property type="component" value="Chromosome"/>
</dbReference>
<dbReference type="Proteomes" id="UP000002519">
    <property type="component" value="Chromosome"/>
</dbReference>
<dbReference type="GO" id="GO:0008697">
    <property type="term" value="F:4-deoxy-L-threo-5-hexosulose-uronate ketol-isomerase activity"/>
    <property type="evidence" value="ECO:0007669"/>
    <property type="project" value="UniProtKB-UniRule"/>
</dbReference>
<dbReference type="GO" id="GO:0008270">
    <property type="term" value="F:zinc ion binding"/>
    <property type="evidence" value="ECO:0007669"/>
    <property type="project" value="UniProtKB-UniRule"/>
</dbReference>
<dbReference type="GO" id="GO:0019698">
    <property type="term" value="P:D-galacturonate catabolic process"/>
    <property type="evidence" value="ECO:0007669"/>
    <property type="project" value="TreeGrafter"/>
</dbReference>
<dbReference type="GO" id="GO:0042840">
    <property type="term" value="P:D-glucuronate catabolic process"/>
    <property type="evidence" value="ECO:0007669"/>
    <property type="project" value="TreeGrafter"/>
</dbReference>
<dbReference type="GO" id="GO:0045490">
    <property type="term" value="P:pectin catabolic process"/>
    <property type="evidence" value="ECO:0007669"/>
    <property type="project" value="UniProtKB-UniRule"/>
</dbReference>
<dbReference type="CDD" id="cd20491">
    <property type="entry name" value="cupin_KduI_C"/>
    <property type="match status" value="1"/>
</dbReference>
<dbReference type="CDD" id="cd20294">
    <property type="entry name" value="cupin_KduI_N"/>
    <property type="match status" value="1"/>
</dbReference>
<dbReference type="FunFam" id="2.60.120.10:FF:000018">
    <property type="entry name" value="4-deoxy-L-threo-5-hexosulose-uronate ketol-isomerase"/>
    <property type="match status" value="1"/>
</dbReference>
<dbReference type="FunFam" id="2.60.120.520:FF:000001">
    <property type="entry name" value="4-deoxy-L-threo-5-hexosulose-uronate ketol-isomerase"/>
    <property type="match status" value="1"/>
</dbReference>
<dbReference type="Gene3D" id="2.60.120.10">
    <property type="entry name" value="Jelly Rolls"/>
    <property type="match status" value="1"/>
</dbReference>
<dbReference type="Gene3D" id="2.60.120.520">
    <property type="entry name" value="pectin degrading enzyme 5-keto 4- deoxyuronate isomerase, domain 1"/>
    <property type="match status" value="1"/>
</dbReference>
<dbReference type="HAMAP" id="MF_00687">
    <property type="entry name" value="KduI"/>
    <property type="match status" value="1"/>
</dbReference>
<dbReference type="InterPro" id="IPR007045">
    <property type="entry name" value="KduI"/>
</dbReference>
<dbReference type="InterPro" id="IPR021120">
    <property type="entry name" value="KduI/IolB_isomerase"/>
</dbReference>
<dbReference type="InterPro" id="IPR027449">
    <property type="entry name" value="KduI_N"/>
</dbReference>
<dbReference type="InterPro" id="IPR014710">
    <property type="entry name" value="RmlC-like_jellyroll"/>
</dbReference>
<dbReference type="InterPro" id="IPR011051">
    <property type="entry name" value="RmlC_Cupin_sf"/>
</dbReference>
<dbReference type="NCBIfam" id="NF002091">
    <property type="entry name" value="PRK00924.1"/>
    <property type="match status" value="1"/>
</dbReference>
<dbReference type="PANTHER" id="PTHR38461">
    <property type="entry name" value="4-DEOXY-L-THREO-5-HEXOSULOSE-URONATE KETOL-ISOMERASE"/>
    <property type="match status" value="1"/>
</dbReference>
<dbReference type="PANTHER" id="PTHR38461:SF1">
    <property type="entry name" value="4-DEOXY-L-THREO-5-HEXOSULOSE-URONATE KETOL-ISOMERASE"/>
    <property type="match status" value="1"/>
</dbReference>
<dbReference type="Pfam" id="PF04962">
    <property type="entry name" value="KduI"/>
    <property type="match status" value="1"/>
</dbReference>
<dbReference type="PIRSF" id="PIRSF006625">
    <property type="entry name" value="KduI"/>
    <property type="match status" value="1"/>
</dbReference>
<dbReference type="SUPFAM" id="SSF51182">
    <property type="entry name" value="RmlC-like cupins"/>
    <property type="match status" value="1"/>
</dbReference>